<gene>
    <name type="primary">zurA</name>
    <name type="ordered locus">lin1485</name>
</gene>
<accession>Q926D8</accession>
<keyword id="KW-0067">ATP-binding</keyword>
<keyword id="KW-0547">Nucleotide-binding</keyword>
<keyword id="KW-0813">Transport</keyword>
<keyword id="KW-0862">Zinc</keyword>
<protein>
    <recommendedName>
        <fullName>Zinc uptake system ATP-binding protein ZurA</fullName>
    </recommendedName>
</protein>
<name>ZURA_LISIN</name>
<organism>
    <name type="scientific">Listeria innocua serovar 6a (strain ATCC BAA-680 / CLIP 11262)</name>
    <dbReference type="NCBI Taxonomy" id="272626"/>
    <lineage>
        <taxon>Bacteria</taxon>
        <taxon>Bacillati</taxon>
        <taxon>Bacillota</taxon>
        <taxon>Bacilli</taxon>
        <taxon>Bacillales</taxon>
        <taxon>Listeriaceae</taxon>
        <taxon>Listeria</taxon>
    </lineage>
</organism>
<feature type="chain" id="PRO_0000093134" description="Zinc uptake system ATP-binding protein ZurA">
    <location>
        <begin position="1"/>
        <end position="257"/>
    </location>
</feature>
<feature type="domain" description="ABC transporter" evidence="1">
    <location>
        <begin position="5"/>
        <end position="241"/>
    </location>
</feature>
<feature type="binding site" evidence="1">
    <location>
        <begin position="37"/>
        <end position="44"/>
    </location>
    <ligand>
        <name>ATP</name>
        <dbReference type="ChEBI" id="CHEBI:30616"/>
    </ligand>
</feature>
<reference key="1">
    <citation type="journal article" date="2001" name="Science">
        <title>Comparative genomics of Listeria species.</title>
        <authorList>
            <person name="Glaser P."/>
            <person name="Frangeul L."/>
            <person name="Buchrieser C."/>
            <person name="Rusniok C."/>
            <person name="Amend A."/>
            <person name="Baquero F."/>
            <person name="Berche P."/>
            <person name="Bloecker H."/>
            <person name="Brandt P."/>
            <person name="Chakraborty T."/>
            <person name="Charbit A."/>
            <person name="Chetouani F."/>
            <person name="Couve E."/>
            <person name="de Daruvar A."/>
            <person name="Dehoux P."/>
            <person name="Domann E."/>
            <person name="Dominguez-Bernal G."/>
            <person name="Duchaud E."/>
            <person name="Durant L."/>
            <person name="Dussurget O."/>
            <person name="Entian K.-D."/>
            <person name="Fsihi H."/>
            <person name="Garcia-del Portillo F."/>
            <person name="Garrido P."/>
            <person name="Gautier L."/>
            <person name="Goebel W."/>
            <person name="Gomez-Lopez N."/>
            <person name="Hain T."/>
            <person name="Hauf J."/>
            <person name="Jackson D."/>
            <person name="Jones L.-M."/>
            <person name="Kaerst U."/>
            <person name="Kreft J."/>
            <person name="Kuhn M."/>
            <person name="Kunst F."/>
            <person name="Kurapkat G."/>
            <person name="Madueno E."/>
            <person name="Maitournam A."/>
            <person name="Mata Vicente J."/>
            <person name="Ng E."/>
            <person name="Nedjari H."/>
            <person name="Nordsiek G."/>
            <person name="Novella S."/>
            <person name="de Pablos B."/>
            <person name="Perez-Diaz J.-C."/>
            <person name="Purcell R."/>
            <person name="Remmel B."/>
            <person name="Rose M."/>
            <person name="Schlueter T."/>
            <person name="Simoes N."/>
            <person name="Tierrez A."/>
            <person name="Vazquez-Boland J.-A."/>
            <person name="Voss H."/>
            <person name="Wehland J."/>
            <person name="Cossart P."/>
        </authorList>
    </citation>
    <scope>NUCLEOTIDE SEQUENCE [LARGE SCALE GENOMIC DNA]</scope>
    <source>
        <strain>ATCC BAA-680 / CLIP 11262</strain>
    </source>
</reference>
<evidence type="ECO:0000255" key="1">
    <source>
        <dbReference type="PROSITE-ProRule" id="PRU00434"/>
    </source>
</evidence>
<evidence type="ECO:0000305" key="2"/>
<comment type="function">
    <text evidence="2">Involved in a zinc uptake transport system.</text>
</comment>
<comment type="similarity">
    <text evidence="2">Belongs to the ABC transporter superfamily.</text>
</comment>
<dbReference type="EMBL" id="AL596168">
    <property type="protein sequence ID" value="CAC96716.1"/>
    <property type="molecule type" value="Genomic_DNA"/>
</dbReference>
<dbReference type="PIR" id="AD1618">
    <property type="entry name" value="AD1618"/>
</dbReference>
<dbReference type="RefSeq" id="WP_003766893.1">
    <property type="nucleotide sequence ID" value="NC_003212.1"/>
</dbReference>
<dbReference type="SMR" id="Q926D8"/>
<dbReference type="STRING" id="272626.gene:17565816"/>
<dbReference type="GeneID" id="93234866"/>
<dbReference type="KEGG" id="lin:zurA"/>
<dbReference type="eggNOG" id="COG1121">
    <property type="taxonomic scope" value="Bacteria"/>
</dbReference>
<dbReference type="HOGENOM" id="CLU_000604_1_11_9"/>
<dbReference type="OrthoDB" id="9806726at2"/>
<dbReference type="Proteomes" id="UP000002513">
    <property type="component" value="Chromosome"/>
</dbReference>
<dbReference type="GO" id="GO:0005524">
    <property type="term" value="F:ATP binding"/>
    <property type="evidence" value="ECO:0007669"/>
    <property type="project" value="UniProtKB-KW"/>
</dbReference>
<dbReference type="GO" id="GO:0016887">
    <property type="term" value="F:ATP hydrolysis activity"/>
    <property type="evidence" value="ECO:0007669"/>
    <property type="project" value="InterPro"/>
</dbReference>
<dbReference type="CDD" id="cd03235">
    <property type="entry name" value="ABC_Metallic_Cations"/>
    <property type="match status" value="1"/>
</dbReference>
<dbReference type="FunFam" id="3.40.50.300:FF:000134">
    <property type="entry name" value="Iron-enterobactin ABC transporter ATP-binding protein"/>
    <property type="match status" value="1"/>
</dbReference>
<dbReference type="Gene3D" id="3.40.50.300">
    <property type="entry name" value="P-loop containing nucleotide triphosphate hydrolases"/>
    <property type="match status" value="1"/>
</dbReference>
<dbReference type="InterPro" id="IPR003593">
    <property type="entry name" value="AAA+_ATPase"/>
</dbReference>
<dbReference type="InterPro" id="IPR003439">
    <property type="entry name" value="ABC_transporter-like_ATP-bd"/>
</dbReference>
<dbReference type="InterPro" id="IPR017871">
    <property type="entry name" value="ABC_transporter-like_CS"/>
</dbReference>
<dbReference type="InterPro" id="IPR050153">
    <property type="entry name" value="Metal_Ion_Import_ABC"/>
</dbReference>
<dbReference type="InterPro" id="IPR027417">
    <property type="entry name" value="P-loop_NTPase"/>
</dbReference>
<dbReference type="PANTHER" id="PTHR42734">
    <property type="entry name" value="METAL TRANSPORT SYSTEM ATP-BINDING PROTEIN TM_0124-RELATED"/>
    <property type="match status" value="1"/>
</dbReference>
<dbReference type="PANTHER" id="PTHR42734:SF17">
    <property type="entry name" value="METAL TRANSPORT SYSTEM ATP-BINDING PROTEIN TM_0124-RELATED"/>
    <property type="match status" value="1"/>
</dbReference>
<dbReference type="Pfam" id="PF00005">
    <property type="entry name" value="ABC_tran"/>
    <property type="match status" value="1"/>
</dbReference>
<dbReference type="SMART" id="SM00382">
    <property type="entry name" value="AAA"/>
    <property type="match status" value="1"/>
</dbReference>
<dbReference type="SUPFAM" id="SSF52540">
    <property type="entry name" value="P-loop containing nucleoside triphosphate hydrolases"/>
    <property type="match status" value="1"/>
</dbReference>
<dbReference type="PROSITE" id="PS00211">
    <property type="entry name" value="ABC_TRANSPORTER_1"/>
    <property type="match status" value="1"/>
</dbReference>
<dbReference type="PROSITE" id="PS50893">
    <property type="entry name" value="ABC_TRANSPORTER_2"/>
    <property type="match status" value="1"/>
</dbReference>
<proteinExistence type="inferred from homology"/>
<sequence length="257" mass="28922">MNKIIEVNNVSYHYDKEHALENIHFQVEKGSFTGLIGPNGSGKSTMLKLILGVLKKQQGSIALFGEKQADFKDWVKIGFVSQKSNAFNSAFPATVKEVVASGLTKKKGLFKTLNNQDKEAIDYALKRVEMTDYLHRNIGELSGGQQQRVFIARALVSRPELLILDEPTVGVDVENVKAFYELLAELNRTEEMTLLLVTHDLVAVNTYVNHVISINKRIIFDGSAHEYQHYLADRELEILAEQRRREDACLDCDASPV</sequence>